<reference key="1">
    <citation type="journal article" date="2006" name="J. Bacteriol.">
        <title>Comparative genomic analysis of three strains of Ehrlichia ruminantium reveals an active process of genome size plasticity.</title>
        <authorList>
            <person name="Frutos R."/>
            <person name="Viari A."/>
            <person name="Ferraz C."/>
            <person name="Morgat A."/>
            <person name="Eychenie S."/>
            <person name="Kandassamy Y."/>
            <person name="Chantal I."/>
            <person name="Bensaid A."/>
            <person name="Coissac E."/>
            <person name="Vachiery N."/>
            <person name="Demaille J."/>
            <person name="Martinez D."/>
        </authorList>
    </citation>
    <scope>NUCLEOTIDE SEQUENCE [LARGE SCALE GENOMIC DNA]</scope>
    <source>
        <strain>Gardel</strain>
    </source>
</reference>
<keyword id="KW-0687">Ribonucleoprotein</keyword>
<keyword id="KW-0689">Ribosomal protein</keyword>
<keyword id="KW-0694">RNA-binding</keyword>
<keyword id="KW-0699">rRNA-binding</keyword>
<organism>
    <name type="scientific">Ehrlichia ruminantium (strain Gardel)</name>
    <dbReference type="NCBI Taxonomy" id="302409"/>
    <lineage>
        <taxon>Bacteria</taxon>
        <taxon>Pseudomonadati</taxon>
        <taxon>Pseudomonadota</taxon>
        <taxon>Alphaproteobacteria</taxon>
        <taxon>Rickettsiales</taxon>
        <taxon>Anaplasmataceae</taxon>
        <taxon>Ehrlichia</taxon>
    </lineage>
</organism>
<accession>Q5FFS0</accession>
<evidence type="ECO:0000255" key="1">
    <source>
        <dbReference type="HAMAP-Rule" id="MF_01310"/>
    </source>
</evidence>
<evidence type="ECO:0000305" key="2"/>
<sequence>MSVTYNKKKKRNVVVGVVHIHATYNNIIVTITDQQGHSLVSTSAGAYGFKGSKKATPYAAQETAGHAVKTVVEQNGMKTVSIKVSGPGAGREAAIRAVQACNLNVTSIKDTTKLPHNGCKLPGRRRV</sequence>
<protein>
    <recommendedName>
        <fullName evidence="1">Small ribosomal subunit protein uS11</fullName>
    </recommendedName>
    <alternativeName>
        <fullName evidence="2">30S ribosomal protein S11</fullName>
    </alternativeName>
</protein>
<name>RS11_EHRRG</name>
<comment type="function">
    <text evidence="1">Located on the platform of the 30S subunit, it bridges several disparate RNA helices of the 16S rRNA. Forms part of the Shine-Dalgarno cleft in the 70S ribosome.</text>
</comment>
<comment type="subunit">
    <text evidence="1">Part of the 30S ribosomal subunit. Interacts with proteins S7 and S18. Binds to IF-3.</text>
</comment>
<comment type="similarity">
    <text evidence="1">Belongs to the universal ribosomal protein uS11 family.</text>
</comment>
<feature type="chain" id="PRO_0000294750" description="Small ribosomal subunit protein uS11">
    <location>
        <begin position="1"/>
        <end position="127"/>
    </location>
</feature>
<dbReference type="EMBL" id="CR925677">
    <property type="protein sequence ID" value="CAI28059.1"/>
    <property type="molecule type" value="Genomic_DNA"/>
</dbReference>
<dbReference type="RefSeq" id="WP_011155267.1">
    <property type="nucleotide sequence ID" value="NC_006831.1"/>
</dbReference>
<dbReference type="SMR" id="Q5FFS0"/>
<dbReference type="GeneID" id="33058140"/>
<dbReference type="KEGG" id="erg:ERGA_CDS_06070"/>
<dbReference type="HOGENOM" id="CLU_072439_5_0_5"/>
<dbReference type="OrthoDB" id="9806415at2"/>
<dbReference type="Proteomes" id="UP000000533">
    <property type="component" value="Chromosome"/>
</dbReference>
<dbReference type="GO" id="GO:1990904">
    <property type="term" value="C:ribonucleoprotein complex"/>
    <property type="evidence" value="ECO:0007669"/>
    <property type="project" value="UniProtKB-KW"/>
</dbReference>
<dbReference type="GO" id="GO:0005840">
    <property type="term" value="C:ribosome"/>
    <property type="evidence" value="ECO:0007669"/>
    <property type="project" value="UniProtKB-KW"/>
</dbReference>
<dbReference type="GO" id="GO:0019843">
    <property type="term" value="F:rRNA binding"/>
    <property type="evidence" value="ECO:0007669"/>
    <property type="project" value="UniProtKB-UniRule"/>
</dbReference>
<dbReference type="GO" id="GO:0003735">
    <property type="term" value="F:structural constituent of ribosome"/>
    <property type="evidence" value="ECO:0007669"/>
    <property type="project" value="InterPro"/>
</dbReference>
<dbReference type="GO" id="GO:0006412">
    <property type="term" value="P:translation"/>
    <property type="evidence" value="ECO:0007669"/>
    <property type="project" value="UniProtKB-UniRule"/>
</dbReference>
<dbReference type="Gene3D" id="3.30.420.80">
    <property type="entry name" value="Ribosomal protein S11"/>
    <property type="match status" value="1"/>
</dbReference>
<dbReference type="HAMAP" id="MF_01310">
    <property type="entry name" value="Ribosomal_uS11"/>
    <property type="match status" value="1"/>
</dbReference>
<dbReference type="InterPro" id="IPR001971">
    <property type="entry name" value="Ribosomal_uS11"/>
</dbReference>
<dbReference type="InterPro" id="IPR019981">
    <property type="entry name" value="Ribosomal_uS11_bac-type"/>
</dbReference>
<dbReference type="InterPro" id="IPR036967">
    <property type="entry name" value="Ribosomal_uS11_sf"/>
</dbReference>
<dbReference type="NCBIfam" id="NF003698">
    <property type="entry name" value="PRK05309.1"/>
    <property type="match status" value="1"/>
</dbReference>
<dbReference type="NCBIfam" id="TIGR03632">
    <property type="entry name" value="uS11_bact"/>
    <property type="match status" value="1"/>
</dbReference>
<dbReference type="PANTHER" id="PTHR11759">
    <property type="entry name" value="40S RIBOSOMAL PROTEIN S14/30S RIBOSOMAL PROTEIN S11"/>
    <property type="match status" value="1"/>
</dbReference>
<dbReference type="Pfam" id="PF00411">
    <property type="entry name" value="Ribosomal_S11"/>
    <property type="match status" value="1"/>
</dbReference>
<dbReference type="PIRSF" id="PIRSF002131">
    <property type="entry name" value="Ribosomal_S11"/>
    <property type="match status" value="1"/>
</dbReference>
<dbReference type="SUPFAM" id="SSF53137">
    <property type="entry name" value="Translational machinery components"/>
    <property type="match status" value="1"/>
</dbReference>
<proteinExistence type="inferred from homology"/>
<gene>
    <name evidence="1" type="primary">rpsK</name>
    <name type="ordered locus">ERGA_CDS_06070</name>
</gene>